<protein>
    <recommendedName>
        <fullName evidence="1">Large ribosomal subunit protein bL34</fullName>
    </recommendedName>
    <alternativeName>
        <fullName evidence="2">50S ribosomal protein L34</fullName>
    </alternativeName>
</protein>
<feature type="chain" id="PRO_1000205836" description="Large ribosomal subunit protein bL34">
    <location>
        <begin position="1"/>
        <end position="47"/>
    </location>
</feature>
<name>RL34_RHOE4</name>
<sequence length="47" mass="5521">MAKGKRTFQPNNRRRARVHGFRLRMRTRAGRAIVSARRRKGRDSLTA</sequence>
<accession>C0ZVP8</accession>
<gene>
    <name evidence="1" type="primary">rpmH</name>
    <name type="ordered locus">RER_60340</name>
</gene>
<keyword id="KW-0687">Ribonucleoprotein</keyword>
<keyword id="KW-0689">Ribosomal protein</keyword>
<proteinExistence type="inferred from homology"/>
<evidence type="ECO:0000255" key="1">
    <source>
        <dbReference type="HAMAP-Rule" id="MF_00391"/>
    </source>
</evidence>
<evidence type="ECO:0000305" key="2"/>
<dbReference type="EMBL" id="AP008957">
    <property type="protein sequence ID" value="BAH36742.1"/>
    <property type="molecule type" value="Genomic_DNA"/>
</dbReference>
<dbReference type="RefSeq" id="WP_003942540.1">
    <property type="nucleotide sequence ID" value="NC_012490.1"/>
</dbReference>
<dbReference type="SMR" id="C0ZVP8"/>
<dbReference type="GeneID" id="93805739"/>
<dbReference type="KEGG" id="rer:RER_60340"/>
<dbReference type="eggNOG" id="COG0230">
    <property type="taxonomic scope" value="Bacteria"/>
</dbReference>
<dbReference type="HOGENOM" id="CLU_129938_2_1_11"/>
<dbReference type="Proteomes" id="UP000002204">
    <property type="component" value="Chromosome"/>
</dbReference>
<dbReference type="GO" id="GO:1990904">
    <property type="term" value="C:ribonucleoprotein complex"/>
    <property type="evidence" value="ECO:0007669"/>
    <property type="project" value="UniProtKB-KW"/>
</dbReference>
<dbReference type="GO" id="GO:0005840">
    <property type="term" value="C:ribosome"/>
    <property type="evidence" value="ECO:0007669"/>
    <property type="project" value="UniProtKB-KW"/>
</dbReference>
<dbReference type="GO" id="GO:0003735">
    <property type="term" value="F:structural constituent of ribosome"/>
    <property type="evidence" value="ECO:0007669"/>
    <property type="project" value="InterPro"/>
</dbReference>
<dbReference type="GO" id="GO:0006412">
    <property type="term" value="P:translation"/>
    <property type="evidence" value="ECO:0007669"/>
    <property type="project" value="UniProtKB-UniRule"/>
</dbReference>
<dbReference type="FunFam" id="1.10.287.3980:FF:000001">
    <property type="entry name" value="Mitochondrial ribosomal protein L34"/>
    <property type="match status" value="1"/>
</dbReference>
<dbReference type="Gene3D" id="1.10.287.3980">
    <property type="match status" value="1"/>
</dbReference>
<dbReference type="HAMAP" id="MF_00391">
    <property type="entry name" value="Ribosomal_bL34"/>
    <property type="match status" value="1"/>
</dbReference>
<dbReference type="InterPro" id="IPR000271">
    <property type="entry name" value="Ribosomal_bL34"/>
</dbReference>
<dbReference type="InterPro" id="IPR020939">
    <property type="entry name" value="Ribosomal_bL34_CS"/>
</dbReference>
<dbReference type="NCBIfam" id="TIGR01030">
    <property type="entry name" value="rpmH_bact"/>
    <property type="match status" value="1"/>
</dbReference>
<dbReference type="PANTHER" id="PTHR14503:SF4">
    <property type="entry name" value="LARGE RIBOSOMAL SUBUNIT PROTEIN BL34M"/>
    <property type="match status" value="1"/>
</dbReference>
<dbReference type="PANTHER" id="PTHR14503">
    <property type="entry name" value="MITOCHONDRIAL RIBOSOMAL PROTEIN 34 FAMILY MEMBER"/>
    <property type="match status" value="1"/>
</dbReference>
<dbReference type="Pfam" id="PF00468">
    <property type="entry name" value="Ribosomal_L34"/>
    <property type="match status" value="1"/>
</dbReference>
<dbReference type="PROSITE" id="PS00784">
    <property type="entry name" value="RIBOSOMAL_L34"/>
    <property type="match status" value="1"/>
</dbReference>
<reference key="1">
    <citation type="submission" date="2005-03" db="EMBL/GenBank/DDBJ databases">
        <title>Comparison of the complete genome sequences of Rhodococcus erythropolis PR4 and Rhodococcus opacus B4.</title>
        <authorList>
            <person name="Takarada H."/>
            <person name="Sekine M."/>
            <person name="Hosoyama A."/>
            <person name="Yamada R."/>
            <person name="Fujisawa T."/>
            <person name="Omata S."/>
            <person name="Shimizu A."/>
            <person name="Tsukatani N."/>
            <person name="Tanikawa S."/>
            <person name="Fujita N."/>
            <person name="Harayama S."/>
        </authorList>
    </citation>
    <scope>NUCLEOTIDE SEQUENCE [LARGE SCALE GENOMIC DNA]</scope>
    <source>
        <strain>PR4 / NBRC 100887</strain>
    </source>
</reference>
<organism>
    <name type="scientific">Rhodococcus erythropolis (strain PR4 / NBRC 100887)</name>
    <dbReference type="NCBI Taxonomy" id="234621"/>
    <lineage>
        <taxon>Bacteria</taxon>
        <taxon>Bacillati</taxon>
        <taxon>Actinomycetota</taxon>
        <taxon>Actinomycetes</taxon>
        <taxon>Mycobacteriales</taxon>
        <taxon>Nocardiaceae</taxon>
        <taxon>Rhodococcus</taxon>
        <taxon>Rhodococcus erythropolis group</taxon>
    </lineage>
</organism>
<comment type="similarity">
    <text evidence="1">Belongs to the bacterial ribosomal protein bL34 family.</text>
</comment>